<accession>Q9KV31</accession>
<comment type="function">
    <text evidence="1">Forms part of the ribosomal stalk which helps the ribosome interact with GTP-bound translation factors. Is thus essential for accurate translation.</text>
</comment>
<comment type="subunit">
    <text evidence="1">Homodimer. Part of the ribosomal stalk of the 50S ribosomal subunit. Forms a multimeric L10(L12)X complex, where L10 forms an elongated spine to which 2 to 4 L12 dimers bind in a sequential fashion. Binds GTP-bound translation factors.</text>
</comment>
<comment type="similarity">
    <text evidence="1">Belongs to the bacterial ribosomal protein bL12 family.</text>
</comment>
<proteinExistence type="inferred from homology"/>
<feature type="chain" id="PRO_0000157601" description="Large ribosomal subunit protein bL12">
    <location>
        <begin position="1"/>
        <end position="121"/>
    </location>
</feature>
<dbReference type="EMBL" id="AE003852">
    <property type="protein sequence ID" value="AAF93500.1"/>
    <property type="molecule type" value="Genomic_DNA"/>
</dbReference>
<dbReference type="PIR" id="E82336">
    <property type="entry name" value="E82336"/>
</dbReference>
<dbReference type="RefSeq" id="NP_229981.1">
    <property type="nucleotide sequence ID" value="NC_002505.1"/>
</dbReference>
<dbReference type="RefSeq" id="WP_000028973.1">
    <property type="nucleotide sequence ID" value="NZ_LT906614.1"/>
</dbReference>
<dbReference type="SMR" id="Q9KV31"/>
<dbReference type="STRING" id="243277.VC_0327"/>
<dbReference type="DNASU" id="2615093"/>
<dbReference type="EnsemblBacteria" id="AAF93500">
    <property type="protein sequence ID" value="AAF93500"/>
    <property type="gene ID" value="VC_0327"/>
</dbReference>
<dbReference type="GeneID" id="69720938"/>
<dbReference type="KEGG" id="vch:VC_0327"/>
<dbReference type="PATRIC" id="fig|243277.26.peg.304"/>
<dbReference type="eggNOG" id="COG0222">
    <property type="taxonomic scope" value="Bacteria"/>
</dbReference>
<dbReference type="HOGENOM" id="CLU_086499_3_2_6"/>
<dbReference type="Proteomes" id="UP000000584">
    <property type="component" value="Chromosome 1"/>
</dbReference>
<dbReference type="GO" id="GO:0022625">
    <property type="term" value="C:cytosolic large ribosomal subunit"/>
    <property type="evidence" value="ECO:0000318"/>
    <property type="project" value="GO_Central"/>
</dbReference>
<dbReference type="GO" id="GO:0003729">
    <property type="term" value="F:mRNA binding"/>
    <property type="evidence" value="ECO:0000318"/>
    <property type="project" value="GO_Central"/>
</dbReference>
<dbReference type="GO" id="GO:0003735">
    <property type="term" value="F:structural constituent of ribosome"/>
    <property type="evidence" value="ECO:0000318"/>
    <property type="project" value="GO_Central"/>
</dbReference>
<dbReference type="GO" id="GO:0006412">
    <property type="term" value="P:translation"/>
    <property type="evidence" value="ECO:0000318"/>
    <property type="project" value="GO_Central"/>
</dbReference>
<dbReference type="CDD" id="cd00387">
    <property type="entry name" value="Ribosomal_L7_L12"/>
    <property type="match status" value="1"/>
</dbReference>
<dbReference type="FunFam" id="1.20.5.710:FF:000001">
    <property type="entry name" value="50S ribosomal protein L7/L12"/>
    <property type="match status" value="1"/>
</dbReference>
<dbReference type="FunFam" id="3.30.1390.10:FF:000001">
    <property type="entry name" value="50S ribosomal protein L7/L12"/>
    <property type="match status" value="1"/>
</dbReference>
<dbReference type="Gene3D" id="3.30.1390.10">
    <property type="match status" value="1"/>
</dbReference>
<dbReference type="Gene3D" id="1.20.5.710">
    <property type="entry name" value="Single helix bin"/>
    <property type="match status" value="1"/>
</dbReference>
<dbReference type="HAMAP" id="MF_00368">
    <property type="entry name" value="Ribosomal_bL12"/>
    <property type="match status" value="1"/>
</dbReference>
<dbReference type="InterPro" id="IPR000206">
    <property type="entry name" value="Ribosomal_bL12"/>
</dbReference>
<dbReference type="InterPro" id="IPR013823">
    <property type="entry name" value="Ribosomal_bL12_C"/>
</dbReference>
<dbReference type="InterPro" id="IPR014719">
    <property type="entry name" value="Ribosomal_bL12_C/ClpS-like"/>
</dbReference>
<dbReference type="InterPro" id="IPR008932">
    <property type="entry name" value="Ribosomal_bL12_oligo"/>
</dbReference>
<dbReference type="InterPro" id="IPR036235">
    <property type="entry name" value="Ribosomal_bL12_oligo_N_sf"/>
</dbReference>
<dbReference type="NCBIfam" id="TIGR00855">
    <property type="entry name" value="L12"/>
    <property type="match status" value="1"/>
</dbReference>
<dbReference type="PANTHER" id="PTHR45987">
    <property type="entry name" value="39S RIBOSOMAL PROTEIN L12"/>
    <property type="match status" value="1"/>
</dbReference>
<dbReference type="PANTHER" id="PTHR45987:SF4">
    <property type="entry name" value="LARGE RIBOSOMAL SUBUNIT PROTEIN BL12M"/>
    <property type="match status" value="1"/>
</dbReference>
<dbReference type="Pfam" id="PF00542">
    <property type="entry name" value="Ribosomal_L12"/>
    <property type="match status" value="1"/>
</dbReference>
<dbReference type="Pfam" id="PF16320">
    <property type="entry name" value="Ribosomal_L12_N"/>
    <property type="match status" value="1"/>
</dbReference>
<dbReference type="SUPFAM" id="SSF54736">
    <property type="entry name" value="ClpS-like"/>
    <property type="match status" value="1"/>
</dbReference>
<dbReference type="SUPFAM" id="SSF48300">
    <property type="entry name" value="Ribosomal protein L7/12, oligomerisation (N-terminal) domain"/>
    <property type="match status" value="1"/>
</dbReference>
<keyword id="KW-1185">Reference proteome</keyword>
<keyword id="KW-0687">Ribonucleoprotein</keyword>
<keyword id="KW-0689">Ribosomal protein</keyword>
<gene>
    <name evidence="1" type="primary">rplL</name>
    <name type="ordered locus">VC_0327</name>
</gene>
<organism>
    <name type="scientific">Vibrio cholerae serotype O1 (strain ATCC 39315 / El Tor Inaba N16961)</name>
    <dbReference type="NCBI Taxonomy" id="243277"/>
    <lineage>
        <taxon>Bacteria</taxon>
        <taxon>Pseudomonadati</taxon>
        <taxon>Pseudomonadota</taxon>
        <taxon>Gammaproteobacteria</taxon>
        <taxon>Vibrionales</taxon>
        <taxon>Vibrionaceae</taxon>
        <taxon>Vibrio</taxon>
    </lineage>
</organism>
<name>RL7_VIBCH</name>
<reference key="1">
    <citation type="journal article" date="2000" name="Nature">
        <title>DNA sequence of both chromosomes of the cholera pathogen Vibrio cholerae.</title>
        <authorList>
            <person name="Heidelberg J.F."/>
            <person name="Eisen J.A."/>
            <person name="Nelson W.C."/>
            <person name="Clayton R.A."/>
            <person name="Gwinn M.L."/>
            <person name="Dodson R.J."/>
            <person name="Haft D.H."/>
            <person name="Hickey E.K."/>
            <person name="Peterson J.D."/>
            <person name="Umayam L.A."/>
            <person name="Gill S.R."/>
            <person name="Nelson K.E."/>
            <person name="Read T.D."/>
            <person name="Tettelin H."/>
            <person name="Richardson D.L."/>
            <person name="Ermolaeva M.D."/>
            <person name="Vamathevan J.J."/>
            <person name="Bass S."/>
            <person name="Qin H."/>
            <person name="Dragoi I."/>
            <person name="Sellers P."/>
            <person name="McDonald L.A."/>
            <person name="Utterback T.R."/>
            <person name="Fleischmann R.D."/>
            <person name="Nierman W.C."/>
            <person name="White O."/>
            <person name="Salzberg S.L."/>
            <person name="Smith H.O."/>
            <person name="Colwell R.R."/>
            <person name="Mekalanos J.J."/>
            <person name="Venter J.C."/>
            <person name="Fraser C.M."/>
        </authorList>
    </citation>
    <scope>NUCLEOTIDE SEQUENCE [LARGE SCALE GENOMIC DNA]</scope>
    <source>
        <strain>ATCC 39315 / El Tor Inaba N16961</strain>
    </source>
</reference>
<evidence type="ECO:0000255" key="1">
    <source>
        <dbReference type="HAMAP-Rule" id="MF_00368"/>
    </source>
</evidence>
<evidence type="ECO:0000305" key="2"/>
<sequence length="121" mass="12252">MSITNEQILDAIAEMSVMQVVELISAMEEKFGVSAAAAVVSGPAAAAAVEEQTEFNVILAAAGANKVAVIKAVRGATGLGLKEAKALVDGAPASVKEAVSKEEAEALKKELEEAGATVEVK</sequence>
<protein>
    <recommendedName>
        <fullName evidence="1">Large ribosomal subunit protein bL12</fullName>
    </recommendedName>
    <alternativeName>
        <fullName evidence="2">50S ribosomal protein L7/L12</fullName>
    </alternativeName>
</protein>